<sequence length="177" mass="18858">MRVGMGYDVHKLVEGRDLILGGVKVPHTLGLLGHSDADVLLHAIMDALLGAAALGDIGKHFPDTDPAYEGISSLKLLEHVRDLIAKKGYVIENIDATVIAQKPKLRPYIEQMEQNVADTLQIAKEQVNIKATTEEWLGFTGREEGIASQAICSLTGLYEASMQVGGGCSGCGGCQAD</sequence>
<organism>
    <name type="scientific">Agathobacter rectalis (strain ATCC 33656 / DSM 3377 / JCM 17463 / KCTC 5835 / VPI 0990)</name>
    <name type="common">Eubacterium rectale</name>
    <dbReference type="NCBI Taxonomy" id="515619"/>
    <lineage>
        <taxon>Bacteria</taxon>
        <taxon>Bacillati</taxon>
        <taxon>Bacillota</taxon>
        <taxon>Clostridia</taxon>
        <taxon>Lachnospirales</taxon>
        <taxon>Lachnospiraceae</taxon>
        <taxon>Agathobacter</taxon>
    </lineage>
</organism>
<feature type="chain" id="PRO_1000202878" description="2-C-methyl-D-erythritol 2,4-cyclodiphosphate synthase">
    <location>
        <begin position="1"/>
        <end position="177"/>
    </location>
</feature>
<feature type="binding site" evidence="1">
    <location>
        <begin position="8"/>
        <end position="10"/>
    </location>
    <ligand>
        <name>4-CDP-2-C-methyl-D-erythritol 2-phosphate</name>
        <dbReference type="ChEBI" id="CHEBI:57919"/>
    </ligand>
</feature>
<feature type="binding site" evidence="1">
    <location>
        <position position="8"/>
    </location>
    <ligand>
        <name>a divalent metal cation</name>
        <dbReference type="ChEBI" id="CHEBI:60240"/>
    </ligand>
</feature>
<feature type="binding site" evidence="1">
    <location>
        <position position="10"/>
    </location>
    <ligand>
        <name>a divalent metal cation</name>
        <dbReference type="ChEBI" id="CHEBI:60240"/>
    </ligand>
</feature>
<feature type="binding site" evidence="1">
    <location>
        <begin position="34"/>
        <end position="35"/>
    </location>
    <ligand>
        <name>4-CDP-2-C-methyl-D-erythritol 2-phosphate</name>
        <dbReference type="ChEBI" id="CHEBI:57919"/>
    </ligand>
</feature>
<feature type="binding site" evidence="1">
    <location>
        <position position="42"/>
    </location>
    <ligand>
        <name>a divalent metal cation</name>
        <dbReference type="ChEBI" id="CHEBI:60240"/>
    </ligand>
</feature>
<feature type="binding site" evidence="1">
    <location>
        <begin position="56"/>
        <end position="58"/>
    </location>
    <ligand>
        <name>4-CDP-2-C-methyl-D-erythritol 2-phosphate</name>
        <dbReference type="ChEBI" id="CHEBI:57919"/>
    </ligand>
</feature>
<feature type="binding site" evidence="1">
    <location>
        <begin position="61"/>
        <end position="65"/>
    </location>
    <ligand>
        <name>4-CDP-2-C-methyl-D-erythritol 2-phosphate</name>
        <dbReference type="ChEBI" id="CHEBI:57919"/>
    </ligand>
</feature>
<feature type="binding site" evidence="1">
    <location>
        <begin position="132"/>
        <end position="135"/>
    </location>
    <ligand>
        <name>4-CDP-2-C-methyl-D-erythritol 2-phosphate</name>
        <dbReference type="ChEBI" id="CHEBI:57919"/>
    </ligand>
</feature>
<feature type="binding site" evidence="1">
    <location>
        <position position="139"/>
    </location>
    <ligand>
        <name>4-CDP-2-C-methyl-D-erythritol 2-phosphate</name>
        <dbReference type="ChEBI" id="CHEBI:57919"/>
    </ligand>
</feature>
<feature type="binding site" evidence="1">
    <location>
        <position position="142"/>
    </location>
    <ligand>
        <name>4-CDP-2-C-methyl-D-erythritol 2-phosphate</name>
        <dbReference type="ChEBI" id="CHEBI:57919"/>
    </ligand>
</feature>
<feature type="site" description="Transition state stabilizer" evidence="1">
    <location>
        <position position="34"/>
    </location>
</feature>
<feature type="site" description="Transition state stabilizer" evidence="1">
    <location>
        <position position="133"/>
    </location>
</feature>
<keyword id="KW-0414">Isoprene biosynthesis</keyword>
<keyword id="KW-0456">Lyase</keyword>
<keyword id="KW-0479">Metal-binding</keyword>
<gene>
    <name evidence="1" type="primary">ispF</name>
    <name type="ordered locus">EUBREC_1445</name>
</gene>
<accession>C4Z8W9</accession>
<proteinExistence type="inferred from homology"/>
<name>ISPF_AGARV</name>
<comment type="function">
    <text evidence="1">Involved in the biosynthesis of isopentenyl diphosphate (IPP) and dimethylallyl diphosphate (DMAPP), two major building blocks of isoprenoid compounds. Catalyzes the conversion of 4-diphosphocytidyl-2-C-methyl-D-erythritol 2-phosphate (CDP-ME2P) to 2-C-methyl-D-erythritol 2,4-cyclodiphosphate (ME-CPP) with a corresponding release of cytidine 5-monophosphate (CMP).</text>
</comment>
<comment type="catalytic activity">
    <reaction evidence="1">
        <text>4-CDP-2-C-methyl-D-erythritol 2-phosphate = 2-C-methyl-D-erythritol 2,4-cyclic diphosphate + CMP</text>
        <dbReference type="Rhea" id="RHEA:23864"/>
        <dbReference type="ChEBI" id="CHEBI:57919"/>
        <dbReference type="ChEBI" id="CHEBI:58483"/>
        <dbReference type="ChEBI" id="CHEBI:60377"/>
        <dbReference type="EC" id="4.6.1.12"/>
    </reaction>
</comment>
<comment type="cofactor">
    <cofactor evidence="1">
        <name>a divalent metal cation</name>
        <dbReference type="ChEBI" id="CHEBI:60240"/>
    </cofactor>
    <text evidence="1">Binds 1 divalent metal cation per subunit.</text>
</comment>
<comment type="pathway">
    <text evidence="1">Isoprenoid biosynthesis; isopentenyl diphosphate biosynthesis via DXP pathway; isopentenyl diphosphate from 1-deoxy-D-xylulose 5-phosphate: step 4/6.</text>
</comment>
<comment type="subunit">
    <text evidence="1">Homotrimer.</text>
</comment>
<comment type="similarity">
    <text evidence="1">Belongs to the IspF family.</text>
</comment>
<evidence type="ECO:0000255" key="1">
    <source>
        <dbReference type="HAMAP-Rule" id="MF_00107"/>
    </source>
</evidence>
<reference key="1">
    <citation type="journal article" date="2009" name="Proc. Natl. Acad. Sci. U.S.A.">
        <title>Characterizing a model human gut microbiota composed of members of its two dominant bacterial phyla.</title>
        <authorList>
            <person name="Mahowald M.A."/>
            <person name="Rey F.E."/>
            <person name="Seedorf H."/>
            <person name="Turnbaugh P.J."/>
            <person name="Fulton R.S."/>
            <person name="Wollam A."/>
            <person name="Shah N."/>
            <person name="Wang C."/>
            <person name="Magrini V."/>
            <person name="Wilson R.K."/>
            <person name="Cantarel B.L."/>
            <person name="Coutinho P.M."/>
            <person name="Henrissat B."/>
            <person name="Crock L.W."/>
            <person name="Russell A."/>
            <person name="Verberkmoes N.C."/>
            <person name="Hettich R.L."/>
            <person name="Gordon J.I."/>
        </authorList>
    </citation>
    <scope>NUCLEOTIDE SEQUENCE [LARGE SCALE GENOMIC DNA]</scope>
    <source>
        <strain>ATCC 33656 / DSM 3377 / JCM 17463 / KCTC 5835 / LMG 30912 / VPI 0990</strain>
    </source>
</reference>
<dbReference type="EC" id="4.6.1.12" evidence="1"/>
<dbReference type="EMBL" id="CP001107">
    <property type="protein sequence ID" value="ACR75200.1"/>
    <property type="molecule type" value="Genomic_DNA"/>
</dbReference>
<dbReference type="RefSeq" id="WP_012742299.1">
    <property type="nucleotide sequence ID" value="NC_012781.1"/>
</dbReference>
<dbReference type="SMR" id="C4Z8W9"/>
<dbReference type="STRING" id="515619.EUBREC_1445"/>
<dbReference type="PaxDb" id="515619-EUBREC_1445"/>
<dbReference type="GeneID" id="86988266"/>
<dbReference type="KEGG" id="ere:EUBREC_1445"/>
<dbReference type="HOGENOM" id="CLU_084630_2_0_9"/>
<dbReference type="UniPathway" id="UPA00056">
    <property type="reaction ID" value="UER00095"/>
</dbReference>
<dbReference type="Proteomes" id="UP000001477">
    <property type="component" value="Chromosome"/>
</dbReference>
<dbReference type="GO" id="GO:0008685">
    <property type="term" value="F:2-C-methyl-D-erythritol 2,4-cyclodiphosphate synthase activity"/>
    <property type="evidence" value="ECO:0007669"/>
    <property type="project" value="UniProtKB-UniRule"/>
</dbReference>
<dbReference type="GO" id="GO:0046872">
    <property type="term" value="F:metal ion binding"/>
    <property type="evidence" value="ECO:0007669"/>
    <property type="project" value="UniProtKB-KW"/>
</dbReference>
<dbReference type="GO" id="GO:0019288">
    <property type="term" value="P:isopentenyl diphosphate biosynthetic process, methylerythritol 4-phosphate pathway"/>
    <property type="evidence" value="ECO:0007669"/>
    <property type="project" value="UniProtKB-UniRule"/>
</dbReference>
<dbReference type="GO" id="GO:0016114">
    <property type="term" value="P:terpenoid biosynthetic process"/>
    <property type="evidence" value="ECO:0007669"/>
    <property type="project" value="InterPro"/>
</dbReference>
<dbReference type="CDD" id="cd00554">
    <property type="entry name" value="MECDP_synthase"/>
    <property type="match status" value="1"/>
</dbReference>
<dbReference type="FunFam" id="3.30.1330.50:FF:000001">
    <property type="entry name" value="2-C-methyl-D-erythritol 2,4-cyclodiphosphate synthase"/>
    <property type="match status" value="1"/>
</dbReference>
<dbReference type="Gene3D" id="3.30.1330.50">
    <property type="entry name" value="2-C-methyl-D-erythritol 2,4-cyclodiphosphate synthase"/>
    <property type="match status" value="1"/>
</dbReference>
<dbReference type="HAMAP" id="MF_00107">
    <property type="entry name" value="IspF"/>
    <property type="match status" value="1"/>
</dbReference>
<dbReference type="InterPro" id="IPR003526">
    <property type="entry name" value="MECDP_synthase"/>
</dbReference>
<dbReference type="InterPro" id="IPR020555">
    <property type="entry name" value="MECDP_synthase_CS"/>
</dbReference>
<dbReference type="InterPro" id="IPR036571">
    <property type="entry name" value="MECDP_synthase_sf"/>
</dbReference>
<dbReference type="NCBIfam" id="TIGR00151">
    <property type="entry name" value="ispF"/>
    <property type="match status" value="1"/>
</dbReference>
<dbReference type="PANTHER" id="PTHR43181">
    <property type="entry name" value="2-C-METHYL-D-ERYTHRITOL 2,4-CYCLODIPHOSPHATE SYNTHASE, CHLOROPLASTIC"/>
    <property type="match status" value="1"/>
</dbReference>
<dbReference type="PANTHER" id="PTHR43181:SF1">
    <property type="entry name" value="2-C-METHYL-D-ERYTHRITOL 2,4-CYCLODIPHOSPHATE SYNTHASE, CHLOROPLASTIC"/>
    <property type="match status" value="1"/>
</dbReference>
<dbReference type="Pfam" id="PF02542">
    <property type="entry name" value="YgbB"/>
    <property type="match status" value="1"/>
</dbReference>
<dbReference type="SUPFAM" id="SSF69765">
    <property type="entry name" value="IpsF-like"/>
    <property type="match status" value="1"/>
</dbReference>
<dbReference type="PROSITE" id="PS01350">
    <property type="entry name" value="ISPF"/>
    <property type="match status" value="1"/>
</dbReference>
<protein>
    <recommendedName>
        <fullName evidence="1">2-C-methyl-D-erythritol 2,4-cyclodiphosphate synthase</fullName>
        <shortName evidence="1">MECDP-synthase</shortName>
        <shortName evidence="1">MECPP-synthase</shortName>
        <shortName evidence="1">MECPS</shortName>
        <ecNumber evidence="1">4.6.1.12</ecNumber>
    </recommendedName>
</protein>